<gene>
    <name type="ordered locus">FPV002</name>
</gene>
<gene>
    <name type="ordered locus">FPV259</name>
</gene>
<proteinExistence type="predicted"/>
<protein>
    <recommendedName>
        <fullName>Uncharacterized protein FPV002/FPV259</fullName>
    </recommendedName>
</protein>
<dbReference type="EMBL" id="AF198100">
    <property type="protein sequence ID" value="AAF44597.1"/>
    <property type="molecule type" value="Genomic_DNA"/>
</dbReference>
<dbReference type="EMBL" id="AF198100">
    <property type="protein sequence ID" value="AAF44612.1"/>
    <property type="molecule type" value="Genomic_DNA"/>
</dbReference>
<dbReference type="PIR" id="A31685">
    <property type="entry name" value="A31685"/>
</dbReference>
<dbReference type="RefSeq" id="NP_038965.1">
    <property type="nucleotide sequence ID" value="NC_002188.1"/>
</dbReference>
<dbReference type="RefSeq" id="NP_039222.1">
    <property type="nucleotide sequence ID" value="NC_002188.1"/>
</dbReference>
<dbReference type="GeneID" id="1486825"/>
<dbReference type="GeneID" id="1486840"/>
<dbReference type="KEGG" id="vg:1486825"/>
<dbReference type="KEGG" id="vg:1486840"/>
<dbReference type="Proteomes" id="UP000008597">
    <property type="component" value="Segment"/>
</dbReference>
<keyword id="KW-1185">Reference proteome</keyword>
<reference key="1">
    <citation type="journal article" date="2000" name="J. Virol.">
        <title>The genome of fowlpox virus.</title>
        <authorList>
            <person name="Afonso C.L."/>
            <person name="Tulman E.R."/>
            <person name="Lu Z."/>
            <person name="Zsak L."/>
            <person name="Kutish G.F."/>
            <person name="Rock D.L."/>
        </authorList>
    </citation>
    <scope>NUCLEOTIDE SEQUENCE [LARGE SCALE GENOMIC DNA]</scope>
</reference>
<organism>
    <name type="scientific">Fowlpox virus (strain NVSL)</name>
    <name type="common">FPV</name>
    <dbReference type="NCBI Taxonomy" id="928301"/>
    <lineage>
        <taxon>Viruses</taxon>
        <taxon>Varidnaviria</taxon>
        <taxon>Bamfordvirae</taxon>
        <taxon>Nucleocytoviricota</taxon>
        <taxon>Pokkesviricetes</taxon>
        <taxon>Chitovirales</taxon>
        <taxon>Poxviridae</taxon>
        <taxon>Chordopoxvirinae</taxon>
        <taxon>Avipoxvirus</taxon>
        <taxon>Fowlpox virus</taxon>
    </lineage>
</organism>
<feature type="chain" id="PRO_0000099723" description="Uncharacterized protein FPV002/FPV259">
    <location>
        <begin position="1"/>
        <end position="222"/>
    </location>
</feature>
<accession>Q9ICF9</accession>
<name>V002_FOWPN</name>
<organismHost>
    <name type="scientific">Vertebrata</name>
    <dbReference type="NCBI Taxonomy" id="7742"/>
</organismHost>
<sequence length="222" mass="26068">MIVEKIAAWLLYPLCLLRCFLCNSVRPATCKCVHCLLYPFEVCCECMSETLDSLEHSCCYCCVLPLLIIREFWRRVILPTLKATCDCIRLPCVLTRRFCKRTICPLAKSWCRCFCCPCEVFLRCLLFPCMMLRRMHRGRLTGVREPGAFRDSRDPARRGTWVNDWCEDLCVWIWSPCCYVKRCIRTMCDTFTKKIFYWFIAPAGSPRMPEEPSPLSRKVFSS</sequence>